<sequence length="328" mass="38224">MSEKIRVLLYYKYVPIEDAQAYAAKHLEFCKSIGLKGRIIIADEGINGTVSGDYETTQKYMDWVHSDERFSDLWFKMDEEEEQAFKKMFVRYKKEIVHLGLEDNQFDEDINPLEVTGQYLNPKEFKEALLDEDTIVLDTRNDYEYDLGHFRGAVRPDIRNFRELPQWVRDNKDKFMEKRVVVYCTGGVRCEKFSGWMVREGFKDVGQLHGGIATYGKDPEVQGELWDGAMYVFDERISVPINHVDPTVISKDHFDGRPCERYVNCANPFCNKQIFASEENEAKYVRGCSPECRAHERNRYVSENGLSRQEWAARLEAIGETLPQVETV</sequence>
<keyword id="KW-0560">Oxidoreductase</keyword>
<keyword id="KW-1185">Reference proteome</keyword>
<keyword id="KW-0819">tRNA processing</keyword>
<feature type="chain" id="PRO_1000135479" description="tRNA uridine(34) hydroxylase">
    <location>
        <begin position="1"/>
        <end position="328"/>
    </location>
</feature>
<feature type="domain" description="Rhodanese" evidence="1">
    <location>
        <begin position="130"/>
        <end position="224"/>
    </location>
</feature>
<feature type="active site" description="Cysteine persulfide intermediate" evidence="1">
    <location>
        <position position="184"/>
    </location>
</feature>
<name>TRHO_STRU0</name>
<reference key="1">
    <citation type="journal article" date="2009" name="BMC Genomics">
        <title>Evidence for niche adaptation in the genome of the bovine pathogen Streptococcus uberis.</title>
        <authorList>
            <person name="Ward P.N."/>
            <person name="Holden M.T.G."/>
            <person name="Leigh J.A."/>
            <person name="Lennard N."/>
            <person name="Bignell A."/>
            <person name="Barron A."/>
            <person name="Clark L."/>
            <person name="Quail M.A."/>
            <person name="Woodward J."/>
            <person name="Barrell B.G."/>
            <person name="Egan S.A."/>
            <person name="Field T.R."/>
            <person name="Maskell D."/>
            <person name="Kehoe M."/>
            <person name="Dowson C.G."/>
            <person name="Chanter N."/>
            <person name="Whatmore A.M."/>
            <person name="Bentley S.D."/>
            <person name="Parkhill J."/>
        </authorList>
    </citation>
    <scope>NUCLEOTIDE SEQUENCE [LARGE SCALE GENOMIC DNA]</scope>
    <source>
        <strain>ATCC BAA-854 / 0140J</strain>
    </source>
</reference>
<comment type="function">
    <text evidence="1">Catalyzes oxygen-dependent 5-hydroxyuridine (ho5U) modification at position 34 in tRNAs.</text>
</comment>
<comment type="catalytic activity">
    <reaction evidence="1">
        <text>uridine(34) in tRNA + AH2 + O2 = 5-hydroxyuridine(34) in tRNA + A + H2O</text>
        <dbReference type="Rhea" id="RHEA:64224"/>
        <dbReference type="Rhea" id="RHEA-COMP:11727"/>
        <dbReference type="Rhea" id="RHEA-COMP:13381"/>
        <dbReference type="ChEBI" id="CHEBI:13193"/>
        <dbReference type="ChEBI" id="CHEBI:15377"/>
        <dbReference type="ChEBI" id="CHEBI:15379"/>
        <dbReference type="ChEBI" id="CHEBI:17499"/>
        <dbReference type="ChEBI" id="CHEBI:65315"/>
        <dbReference type="ChEBI" id="CHEBI:136877"/>
    </reaction>
</comment>
<comment type="similarity">
    <text evidence="1">Belongs to the TrhO family.</text>
</comment>
<accession>B9DUQ2</accession>
<organism>
    <name type="scientific">Streptococcus uberis (strain ATCC BAA-854 / 0140J)</name>
    <dbReference type="NCBI Taxonomy" id="218495"/>
    <lineage>
        <taxon>Bacteria</taxon>
        <taxon>Bacillati</taxon>
        <taxon>Bacillota</taxon>
        <taxon>Bacilli</taxon>
        <taxon>Lactobacillales</taxon>
        <taxon>Streptococcaceae</taxon>
        <taxon>Streptococcus</taxon>
    </lineage>
</organism>
<evidence type="ECO:0000255" key="1">
    <source>
        <dbReference type="HAMAP-Rule" id="MF_00469"/>
    </source>
</evidence>
<protein>
    <recommendedName>
        <fullName evidence="1">tRNA uridine(34) hydroxylase</fullName>
        <ecNumber evidence="1">1.14.-.-</ecNumber>
    </recommendedName>
    <alternativeName>
        <fullName evidence="1">tRNA hydroxylation protein O</fullName>
    </alternativeName>
</protein>
<proteinExistence type="inferred from homology"/>
<gene>
    <name evidence="1" type="primary">trhO</name>
    <name type="ordered locus">SUB1138</name>
</gene>
<dbReference type="EC" id="1.14.-.-" evidence="1"/>
<dbReference type="EMBL" id="AM946015">
    <property type="protein sequence ID" value="CAR42514.1"/>
    <property type="molecule type" value="Genomic_DNA"/>
</dbReference>
<dbReference type="RefSeq" id="WP_012658625.1">
    <property type="nucleotide sequence ID" value="NC_012004.1"/>
</dbReference>
<dbReference type="SMR" id="B9DUQ2"/>
<dbReference type="STRING" id="218495.SUB1138"/>
<dbReference type="KEGG" id="sub:SUB1138"/>
<dbReference type="eggNOG" id="COG1054">
    <property type="taxonomic scope" value="Bacteria"/>
</dbReference>
<dbReference type="HOGENOM" id="CLU_038878_1_0_9"/>
<dbReference type="OrthoDB" id="9778326at2"/>
<dbReference type="Proteomes" id="UP000000449">
    <property type="component" value="Chromosome"/>
</dbReference>
<dbReference type="GO" id="GO:0016705">
    <property type="term" value="F:oxidoreductase activity, acting on paired donors, with incorporation or reduction of molecular oxygen"/>
    <property type="evidence" value="ECO:0007669"/>
    <property type="project" value="UniProtKB-UniRule"/>
</dbReference>
<dbReference type="GO" id="GO:0006400">
    <property type="term" value="P:tRNA modification"/>
    <property type="evidence" value="ECO:0007669"/>
    <property type="project" value="UniProtKB-UniRule"/>
</dbReference>
<dbReference type="CDD" id="cd01518">
    <property type="entry name" value="RHOD_YceA"/>
    <property type="match status" value="1"/>
</dbReference>
<dbReference type="Gene3D" id="3.30.70.100">
    <property type="match status" value="1"/>
</dbReference>
<dbReference type="Gene3D" id="3.40.250.10">
    <property type="entry name" value="Rhodanese-like domain"/>
    <property type="match status" value="1"/>
</dbReference>
<dbReference type="HAMAP" id="MF_00469">
    <property type="entry name" value="TrhO"/>
    <property type="match status" value="1"/>
</dbReference>
<dbReference type="InterPro" id="IPR001763">
    <property type="entry name" value="Rhodanese-like_dom"/>
</dbReference>
<dbReference type="InterPro" id="IPR036873">
    <property type="entry name" value="Rhodanese-like_dom_sf"/>
</dbReference>
<dbReference type="InterPro" id="IPR022111">
    <property type="entry name" value="Rhodanese_C"/>
</dbReference>
<dbReference type="InterPro" id="IPR020936">
    <property type="entry name" value="TrhO"/>
</dbReference>
<dbReference type="InterPro" id="IPR040503">
    <property type="entry name" value="TRHO_N"/>
</dbReference>
<dbReference type="NCBIfam" id="NF001135">
    <property type="entry name" value="PRK00142.1-3"/>
    <property type="match status" value="1"/>
</dbReference>
<dbReference type="NCBIfam" id="NF001137">
    <property type="entry name" value="PRK00142.1-5"/>
    <property type="match status" value="1"/>
</dbReference>
<dbReference type="PANTHER" id="PTHR43268:SF3">
    <property type="entry name" value="RHODANESE-LIKE DOMAIN-CONTAINING PROTEIN 7-RELATED"/>
    <property type="match status" value="1"/>
</dbReference>
<dbReference type="PANTHER" id="PTHR43268">
    <property type="entry name" value="THIOSULFATE SULFURTRANSFERASE/RHODANESE-LIKE DOMAIN-CONTAINING PROTEIN 2"/>
    <property type="match status" value="1"/>
</dbReference>
<dbReference type="Pfam" id="PF00581">
    <property type="entry name" value="Rhodanese"/>
    <property type="match status" value="1"/>
</dbReference>
<dbReference type="Pfam" id="PF12368">
    <property type="entry name" value="Rhodanese_C"/>
    <property type="match status" value="1"/>
</dbReference>
<dbReference type="Pfam" id="PF17773">
    <property type="entry name" value="UPF0176_N"/>
    <property type="match status" value="1"/>
</dbReference>
<dbReference type="SMART" id="SM00450">
    <property type="entry name" value="RHOD"/>
    <property type="match status" value="1"/>
</dbReference>
<dbReference type="SUPFAM" id="SSF52821">
    <property type="entry name" value="Rhodanese/Cell cycle control phosphatase"/>
    <property type="match status" value="1"/>
</dbReference>
<dbReference type="PROSITE" id="PS50206">
    <property type="entry name" value="RHODANESE_3"/>
    <property type="match status" value="1"/>
</dbReference>